<comment type="function">
    <text evidence="1">This protein is involved in the repair of mismatches in DNA. It is possible that it carries out the mismatch recognition step. This protein has a weak ATPase activity (By similarity).</text>
</comment>
<comment type="similarity">
    <text evidence="3">Belongs to the DNA mismatch repair MutS family.</text>
</comment>
<accession>O83348</accession>
<name>MUTS_TREPA</name>
<feature type="chain" id="PRO_0000115163" description="DNA mismatch repair protein MutS">
    <location>
        <begin position="1"/>
        <end position="900"/>
    </location>
</feature>
<feature type="binding site" evidence="2">
    <location>
        <begin position="626"/>
        <end position="633"/>
    </location>
    <ligand>
        <name>ATP</name>
        <dbReference type="ChEBI" id="CHEBI:30616"/>
    </ligand>
</feature>
<sequence>MRSLASDTPLMRQYHAIRAQHPDAVLFFRLGDFYEMFDSDALHVSTLLGLTLTKRNGTPMCGVPVHTARTHIARLLKHGKKVALCEQVSHPVPGELTQRKVIEIISPGTAVEDDFLSQGFSQYLATVCASDATVAFSYLEVSTGAFFITSFPRAEAADALQKEFGRVQPSEVLLSASVLRSLPELAAILSLYPRLVRTTGADALFNPEHTKNRLHHCFRTRNLDCLTLLPHSPDLAAAGALIAYLEETTRHPLSHVSAITRYHIHDFVEIDDATRKNLEILQNLHDSTHAHSLFETLNYTHTAMGTRLLRYWLHHPLRSQEEIQKRLSAVVFFHHRPHILKTLRATLSCVRDVERLVARVALEKAHGRDLLALKESLRAILTFRSLERESPFPPDLLPSEGDTPVLQELYGLLEQSIKEDCPVTLSDGNLIKRGFSASLDELHRVRDNANEILKQYLAEERERTGIGTLKMKYNRMLGHFLEVSKGHLSAVPAHFIRRRSLSNADRFTTEQLSELEAKLARAREGLVSFEQELFADIRRTVCSHTQLLRTNAARVAQLDVLQSFAHAALQHGWSQPVFIKDGALRITGGRHPVVELHLPSGEFVPNDLTLSSSEHAVLPRFALITGPNMAGKSTFLRQTALICLIAQVGSFVPAEKAELTPVDRIFCRVGAADNLARGESTFLVEMSETAHILRAATRDSLVIMDEVGRGTATEDGLSIAQAVSEYLLHHVRAKTLFATHYHELSRLAHPQLEHLKLDVLETDNTIVFLKKVTPGSCGSSYGIYVARLAGLPESVLARACELLKQLQQRAGSAPRASAAHEADAVAQTEAVHAHKAASKPCAQRVSADLFTQEELIGAEIASLNPDAITPLEALTLIARWKRSLRGSATQQSSAMTKRKG</sequence>
<evidence type="ECO:0000250" key="1"/>
<evidence type="ECO:0000255" key="2"/>
<evidence type="ECO:0000305" key="3"/>
<protein>
    <recommendedName>
        <fullName>DNA mismatch repair protein MutS</fullName>
    </recommendedName>
</protein>
<keyword id="KW-0067">ATP-binding</keyword>
<keyword id="KW-0227">DNA damage</keyword>
<keyword id="KW-0234">DNA repair</keyword>
<keyword id="KW-0238">DNA-binding</keyword>
<keyword id="KW-0547">Nucleotide-binding</keyword>
<keyword id="KW-1185">Reference proteome</keyword>
<dbReference type="EMBL" id="AE000520">
    <property type="protein sequence ID" value="AAC65315.1"/>
    <property type="molecule type" value="Genomic_DNA"/>
</dbReference>
<dbReference type="PIR" id="C71339">
    <property type="entry name" value="C71339"/>
</dbReference>
<dbReference type="RefSeq" id="WP_010881776.1">
    <property type="nucleotide sequence ID" value="NC_021490.2"/>
</dbReference>
<dbReference type="SMR" id="O83348"/>
<dbReference type="IntAct" id="O83348">
    <property type="interactions" value="11"/>
</dbReference>
<dbReference type="STRING" id="243276.TP_0328"/>
<dbReference type="EnsemblBacteria" id="AAC65315">
    <property type="protein sequence ID" value="AAC65315"/>
    <property type="gene ID" value="TP_0328"/>
</dbReference>
<dbReference type="GeneID" id="93876108"/>
<dbReference type="KEGG" id="tpa:TP_0328"/>
<dbReference type="KEGG" id="tpw:TPANIC_0328"/>
<dbReference type="eggNOG" id="COG0249">
    <property type="taxonomic scope" value="Bacteria"/>
</dbReference>
<dbReference type="HOGENOM" id="CLU_002472_1_3_12"/>
<dbReference type="OrthoDB" id="9802448at2"/>
<dbReference type="Proteomes" id="UP000000811">
    <property type="component" value="Chromosome"/>
</dbReference>
<dbReference type="GO" id="GO:0005829">
    <property type="term" value="C:cytosol"/>
    <property type="evidence" value="ECO:0007669"/>
    <property type="project" value="TreeGrafter"/>
</dbReference>
<dbReference type="GO" id="GO:0005524">
    <property type="term" value="F:ATP binding"/>
    <property type="evidence" value="ECO:0007669"/>
    <property type="project" value="UniProtKB-UniRule"/>
</dbReference>
<dbReference type="GO" id="GO:0140664">
    <property type="term" value="F:ATP-dependent DNA damage sensor activity"/>
    <property type="evidence" value="ECO:0007669"/>
    <property type="project" value="InterPro"/>
</dbReference>
<dbReference type="GO" id="GO:0003684">
    <property type="term" value="F:damaged DNA binding"/>
    <property type="evidence" value="ECO:0007669"/>
    <property type="project" value="UniProtKB-UniRule"/>
</dbReference>
<dbReference type="GO" id="GO:0030983">
    <property type="term" value="F:mismatched DNA binding"/>
    <property type="evidence" value="ECO:0007669"/>
    <property type="project" value="InterPro"/>
</dbReference>
<dbReference type="GO" id="GO:0006298">
    <property type="term" value="P:mismatch repair"/>
    <property type="evidence" value="ECO:0007669"/>
    <property type="project" value="UniProtKB-UniRule"/>
</dbReference>
<dbReference type="Gene3D" id="1.10.1420.10">
    <property type="match status" value="2"/>
</dbReference>
<dbReference type="Gene3D" id="3.40.1170.10">
    <property type="entry name" value="DNA repair protein MutS, domain I"/>
    <property type="match status" value="1"/>
</dbReference>
<dbReference type="Gene3D" id="3.30.420.110">
    <property type="entry name" value="MutS, connector domain"/>
    <property type="match status" value="1"/>
</dbReference>
<dbReference type="Gene3D" id="3.40.50.300">
    <property type="entry name" value="P-loop containing nucleotide triphosphate hydrolases"/>
    <property type="match status" value="1"/>
</dbReference>
<dbReference type="HAMAP" id="MF_00096">
    <property type="entry name" value="MutS"/>
    <property type="match status" value="1"/>
</dbReference>
<dbReference type="InterPro" id="IPR005748">
    <property type="entry name" value="DNA_mismatch_repair_MutS"/>
</dbReference>
<dbReference type="InterPro" id="IPR007695">
    <property type="entry name" value="DNA_mismatch_repair_MutS-lik_N"/>
</dbReference>
<dbReference type="InterPro" id="IPR017261">
    <property type="entry name" value="DNA_mismatch_repair_MutS/MSH"/>
</dbReference>
<dbReference type="InterPro" id="IPR000432">
    <property type="entry name" value="DNA_mismatch_repair_MutS_C"/>
</dbReference>
<dbReference type="InterPro" id="IPR007861">
    <property type="entry name" value="DNA_mismatch_repair_MutS_clamp"/>
</dbReference>
<dbReference type="InterPro" id="IPR007696">
    <property type="entry name" value="DNA_mismatch_repair_MutS_core"/>
</dbReference>
<dbReference type="InterPro" id="IPR016151">
    <property type="entry name" value="DNA_mismatch_repair_MutS_N"/>
</dbReference>
<dbReference type="InterPro" id="IPR036187">
    <property type="entry name" value="DNA_mismatch_repair_MutS_sf"/>
</dbReference>
<dbReference type="InterPro" id="IPR007860">
    <property type="entry name" value="DNA_mmatch_repair_MutS_con_dom"/>
</dbReference>
<dbReference type="InterPro" id="IPR045076">
    <property type="entry name" value="MutS"/>
</dbReference>
<dbReference type="InterPro" id="IPR036678">
    <property type="entry name" value="MutS_con_dom_sf"/>
</dbReference>
<dbReference type="InterPro" id="IPR027417">
    <property type="entry name" value="P-loop_NTPase"/>
</dbReference>
<dbReference type="NCBIfam" id="TIGR01070">
    <property type="entry name" value="mutS1"/>
    <property type="match status" value="1"/>
</dbReference>
<dbReference type="NCBIfam" id="NF003810">
    <property type="entry name" value="PRK05399.1"/>
    <property type="match status" value="1"/>
</dbReference>
<dbReference type="PANTHER" id="PTHR11361:SF34">
    <property type="entry name" value="DNA MISMATCH REPAIR PROTEIN MSH1, MITOCHONDRIAL"/>
    <property type="match status" value="1"/>
</dbReference>
<dbReference type="PANTHER" id="PTHR11361">
    <property type="entry name" value="DNA MISMATCH REPAIR PROTEIN MUTS FAMILY MEMBER"/>
    <property type="match status" value="1"/>
</dbReference>
<dbReference type="Pfam" id="PF01624">
    <property type="entry name" value="MutS_I"/>
    <property type="match status" value="1"/>
</dbReference>
<dbReference type="Pfam" id="PF05188">
    <property type="entry name" value="MutS_II"/>
    <property type="match status" value="1"/>
</dbReference>
<dbReference type="Pfam" id="PF05192">
    <property type="entry name" value="MutS_III"/>
    <property type="match status" value="1"/>
</dbReference>
<dbReference type="Pfam" id="PF05190">
    <property type="entry name" value="MutS_IV"/>
    <property type="match status" value="1"/>
</dbReference>
<dbReference type="Pfam" id="PF00488">
    <property type="entry name" value="MutS_V"/>
    <property type="match status" value="1"/>
</dbReference>
<dbReference type="PIRSF" id="PIRSF037677">
    <property type="entry name" value="DNA_mis_repair_Msh6"/>
    <property type="match status" value="1"/>
</dbReference>
<dbReference type="SMART" id="SM00534">
    <property type="entry name" value="MUTSac"/>
    <property type="match status" value="1"/>
</dbReference>
<dbReference type="SMART" id="SM00533">
    <property type="entry name" value="MUTSd"/>
    <property type="match status" value="1"/>
</dbReference>
<dbReference type="SUPFAM" id="SSF55271">
    <property type="entry name" value="DNA repair protein MutS, domain I"/>
    <property type="match status" value="1"/>
</dbReference>
<dbReference type="SUPFAM" id="SSF53150">
    <property type="entry name" value="DNA repair protein MutS, domain II"/>
    <property type="match status" value="1"/>
</dbReference>
<dbReference type="SUPFAM" id="SSF48334">
    <property type="entry name" value="DNA repair protein MutS, domain III"/>
    <property type="match status" value="1"/>
</dbReference>
<dbReference type="SUPFAM" id="SSF52540">
    <property type="entry name" value="P-loop containing nucleoside triphosphate hydrolases"/>
    <property type="match status" value="1"/>
</dbReference>
<dbReference type="PROSITE" id="PS00486">
    <property type="entry name" value="DNA_MISMATCH_REPAIR_2"/>
    <property type="match status" value="1"/>
</dbReference>
<organism>
    <name type="scientific">Treponema pallidum (strain Nichols)</name>
    <dbReference type="NCBI Taxonomy" id="243276"/>
    <lineage>
        <taxon>Bacteria</taxon>
        <taxon>Pseudomonadati</taxon>
        <taxon>Spirochaetota</taxon>
        <taxon>Spirochaetia</taxon>
        <taxon>Spirochaetales</taxon>
        <taxon>Treponemataceae</taxon>
        <taxon>Treponema</taxon>
    </lineage>
</organism>
<proteinExistence type="inferred from homology"/>
<reference key="1">
    <citation type="journal article" date="1998" name="Science">
        <title>Complete genome sequence of Treponema pallidum, the syphilis spirochete.</title>
        <authorList>
            <person name="Fraser C.M."/>
            <person name="Norris S.J."/>
            <person name="Weinstock G.M."/>
            <person name="White O."/>
            <person name="Sutton G.G."/>
            <person name="Dodson R.J."/>
            <person name="Gwinn M.L."/>
            <person name="Hickey E.K."/>
            <person name="Clayton R.A."/>
            <person name="Ketchum K.A."/>
            <person name="Sodergren E."/>
            <person name="Hardham J.M."/>
            <person name="McLeod M.P."/>
            <person name="Salzberg S.L."/>
            <person name="Peterson J.D."/>
            <person name="Khalak H.G."/>
            <person name="Richardson D.L."/>
            <person name="Howell J.K."/>
            <person name="Chidambaram M."/>
            <person name="Utterback T.R."/>
            <person name="McDonald L.A."/>
            <person name="Artiach P."/>
            <person name="Bowman C."/>
            <person name="Cotton M.D."/>
            <person name="Fujii C."/>
            <person name="Garland S.A."/>
            <person name="Hatch B."/>
            <person name="Horst K."/>
            <person name="Roberts K.M."/>
            <person name="Sandusky M."/>
            <person name="Weidman J.F."/>
            <person name="Smith H.O."/>
            <person name="Venter J.C."/>
        </authorList>
    </citation>
    <scope>NUCLEOTIDE SEQUENCE [LARGE SCALE GENOMIC DNA]</scope>
    <source>
        <strain>Nichols</strain>
    </source>
</reference>
<gene>
    <name type="primary">mutS</name>
    <name type="ordered locus">TP_0328</name>
</gene>